<reference key="1">
    <citation type="submission" date="2004-11" db="EMBL/GenBank/DDBJ databases">
        <authorList>
            <consortium name="The German cDNA consortium"/>
        </authorList>
    </citation>
    <scope>NUCLEOTIDE SEQUENCE [LARGE SCALE MRNA]</scope>
    <source>
        <tissue>Brain cortex</tissue>
    </source>
</reference>
<name>MTMR2_PONAB</name>
<evidence type="ECO:0000250" key="1">
    <source>
        <dbReference type="UniProtKB" id="Q13614"/>
    </source>
</evidence>
<evidence type="ECO:0000250" key="2">
    <source>
        <dbReference type="UniProtKB" id="Q9Z2D1"/>
    </source>
</evidence>
<evidence type="ECO:0000255" key="3"/>
<evidence type="ECO:0000255" key="4">
    <source>
        <dbReference type="PROSITE-ProRule" id="PRU00669"/>
    </source>
</evidence>
<evidence type="ECO:0000256" key="5">
    <source>
        <dbReference type="SAM" id="MobiDB-lite"/>
    </source>
</evidence>
<evidence type="ECO:0000305" key="6"/>
<organism>
    <name type="scientific">Pongo abelii</name>
    <name type="common">Sumatran orangutan</name>
    <name type="synonym">Pongo pygmaeus abelii</name>
    <dbReference type="NCBI Taxonomy" id="9601"/>
    <lineage>
        <taxon>Eukaryota</taxon>
        <taxon>Metazoa</taxon>
        <taxon>Chordata</taxon>
        <taxon>Craniata</taxon>
        <taxon>Vertebrata</taxon>
        <taxon>Euteleostomi</taxon>
        <taxon>Mammalia</taxon>
        <taxon>Eutheria</taxon>
        <taxon>Euarchontoglires</taxon>
        <taxon>Primates</taxon>
        <taxon>Haplorrhini</taxon>
        <taxon>Catarrhini</taxon>
        <taxon>Hominidae</taxon>
        <taxon>Pongo</taxon>
    </lineage>
</organism>
<proteinExistence type="evidence at transcript level"/>
<accession>Q5REB9</accession>
<protein>
    <recommendedName>
        <fullName>Phosphatidylinositol-3,5-bisphosphate 3-phosphatase MTMR2</fullName>
        <ecNumber evidence="1">3.1.3.95</ecNumber>
    </recommendedName>
    <alternativeName>
        <fullName evidence="1">Myotubularin-related protein 2</fullName>
    </alternativeName>
    <alternativeName>
        <fullName evidence="1">Phosphatidylinositol-3-phosphate phosphatase</fullName>
    </alternativeName>
</protein>
<feature type="chain" id="PRO_0000356228" description="Phosphatidylinositol-3,5-bisphosphate 3-phosphatase MTMR2">
    <location>
        <begin position="1"/>
        <end position="643"/>
    </location>
</feature>
<feature type="domain" description="GRAM" evidence="3">
    <location>
        <begin position="68"/>
        <end position="139"/>
    </location>
</feature>
<feature type="domain" description="Myotubularin phosphatase" evidence="4">
    <location>
        <begin position="205"/>
        <end position="580"/>
    </location>
</feature>
<feature type="region of interest" description="Disordered" evidence="5">
    <location>
        <begin position="1"/>
        <end position="56"/>
    </location>
</feature>
<feature type="region of interest" description="Disordered" evidence="5">
    <location>
        <begin position="615"/>
        <end position="643"/>
    </location>
</feature>
<feature type="coiled-coil region" evidence="3">
    <location>
        <begin position="593"/>
        <end position="627"/>
    </location>
</feature>
<feature type="compositionally biased region" description="Polar residues" evidence="5">
    <location>
        <begin position="1"/>
        <end position="12"/>
    </location>
</feature>
<feature type="compositionally biased region" description="Polar residues" evidence="5">
    <location>
        <begin position="23"/>
        <end position="40"/>
    </location>
</feature>
<feature type="compositionally biased region" description="Low complexity" evidence="5">
    <location>
        <begin position="41"/>
        <end position="55"/>
    </location>
</feature>
<feature type="compositionally biased region" description="Low complexity" evidence="5">
    <location>
        <begin position="620"/>
        <end position="631"/>
    </location>
</feature>
<feature type="compositionally biased region" description="Polar residues" evidence="5">
    <location>
        <begin position="632"/>
        <end position="643"/>
    </location>
</feature>
<feature type="active site" description="Phosphocysteine intermediate" evidence="1">
    <location>
        <position position="417"/>
    </location>
</feature>
<feature type="binding site" evidence="1">
    <location>
        <position position="330"/>
    </location>
    <ligand>
        <name>a 1,2-diacyl-sn-glycero-3-phospho-(1D-myo-inositol-3,5-bisphosphate)</name>
        <dbReference type="ChEBI" id="CHEBI:57923"/>
    </ligand>
</feature>
<feature type="binding site" evidence="1">
    <location>
        <position position="330"/>
    </location>
    <ligand>
        <name>a 1,2-diacyl-sn-glycero-3-phospho-(1D-myo-inositol-3-phosphate)</name>
        <dbReference type="ChEBI" id="CHEBI:58088"/>
    </ligand>
</feature>
<feature type="binding site" evidence="1">
    <location>
        <position position="355"/>
    </location>
    <ligand>
        <name>a 1,2-diacyl-sn-glycero-3-phospho-(1D-myo-inositol-3,5-bisphosphate)</name>
        <dbReference type="ChEBI" id="CHEBI:57923"/>
    </ligand>
</feature>
<feature type="binding site" evidence="1">
    <location>
        <position position="355"/>
    </location>
    <ligand>
        <name>a 1,2-diacyl-sn-glycero-3-phospho-(1D-myo-inositol-3-phosphate)</name>
        <dbReference type="ChEBI" id="CHEBI:58088"/>
    </ligand>
</feature>
<feature type="binding site" evidence="1">
    <location>
        <position position="356"/>
    </location>
    <ligand>
        <name>a 1,2-diacyl-sn-glycero-3-phospho-(1D-myo-inositol-3,5-bisphosphate)</name>
        <dbReference type="ChEBI" id="CHEBI:57923"/>
    </ligand>
</feature>
<feature type="binding site" evidence="1">
    <location>
        <position position="356"/>
    </location>
    <ligand>
        <name>a 1,2-diacyl-sn-glycero-3-phospho-(1D-myo-inositol-3-phosphate)</name>
        <dbReference type="ChEBI" id="CHEBI:58088"/>
    </ligand>
</feature>
<feature type="binding site" evidence="1">
    <location>
        <position position="418"/>
    </location>
    <ligand>
        <name>a 1,2-diacyl-sn-glycero-3-phospho-(1D-myo-inositol-3,5-bisphosphate)</name>
        <dbReference type="ChEBI" id="CHEBI:57923"/>
    </ligand>
</feature>
<feature type="binding site" evidence="1">
    <location>
        <position position="418"/>
    </location>
    <ligand>
        <name>a 1,2-diacyl-sn-glycero-3-phospho-(1D-myo-inositol-3-phosphate)</name>
        <dbReference type="ChEBI" id="CHEBI:58088"/>
    </ligand>
</feature>
<feature type="binding site" evidence="1">
    <location>
        <position position="419"/>
    </location>
    <ligand>
        <name>a 1,2-diacyl-sn-glycero-3-phospho-(1D-myo-inositol-3,5-bisphosphate)</name>
        <dbReference type="ChEBI" id="CHEBI:57923"/>
    </ligand>
</feature>
<feature type="binding site" evidence="1">
    <location>
        <position position="419"/>
    </location>
    <ligand>
        <name>a 1,2-diacyl-sn-glycero-3-phospho-(1D-myo-inositol-3-phosphate)</name>
        <dbReference type="ChEBI" id="CHEBI:58088"/>
    </ligand>
</feature>
<feature type="binding site" evidence="1">
    <location>
        <position position="420"/>
    </location>
    <ligand>
        <name>a 1,2-diacyl-sn-glycero-3-phospho-(1D-myo-inositol-3,5-bisphosphate)</name>
        <dbReference type="ChEBI" id="CHEBI:57923"/>
    </ligand>
</feature>
<feature type="binding site" evidence="1">
    <location>
        <position position="420"/>
    </location>
    <ligand>
        <name>a 1,2-diacyl-sn-glycero-3-phospho-(1D-myo-inositol-3-phosphate)</name>
        <dbReference type="ChEBI" id="CHEBI:58088"/>
    </ligand>
</feature>
<feature type="binding site" evidence="1">
    <location>
        <position position="421"/>
    </location>
    <ligand>
        <name>a 1,2-diacyl-sn-glycero-3-phospho-(1D-myo-inositol-3,5-bisphosphate)</name>
        <dbReference type="ChEBI" id="CHEBI:57923"/>
    </ligand>
</feature>
<feature type="binding site" evidence="1">
    <location>
        <position position="421"/>
    </location>
    <ligand>
        <name>a 1,2-diacyl-sn-glycero-3-phospho-(1D-myo-inositol-3-phosphate)</name>
        <dbReference type="ChEBI" id="CHEBI:58088"/>
    </ligand>
</feature>
<feature type="binding site" evidence="1">
    <location>
        <position position="422"/>
    </location>
    <ligand>
        <name>a 1,2-diacyl-sn-glycero-3-phospho-(1D-myo-inositol-3,5-bisphosphate)</name>
        <dbReference type="ChEBI" id="CHEBI:57923"/>
    </ligand>
</feature>
<feature type="binding site" evidence="1">
    <location>
        <position position="422"/>
    </location>
    <ligand>
        <name>a 1,2-diacyl-sn-glycero-3-phospho-(1D-myo-inositol-3-phosphate)</name>
        <dbReference type="ChEBI" id="CHEBI:58088"/>
    </ligand>
</feature>
<feature type="binding site" evidence="1">
    <location>
        <position position="423"/>
    </location>
    <ligand>
        <name>a 1,2-diacyl-sn-glycero-3-phospho-(1D-myo-inositol-3,5-bisphosphate)</name>
        <dbReference type="ChEBI" id="CHEBI:57923"/>
    </ligand>
</feature>
<feature type="binding site" evidence="1">
    <location>
        <position position="423"/>
    </location>
    <ligand>
        <name>a 1,2-diacyl-sn-glycero-3-phospho-(1D-myo-inositol-3-phosphate)</name>
        <dbReference type="ChEBI" id="CHEBI:58088"/>
    </ligand>
</feature>
<feature type="binding site" evidence="1">
    <location>
        <position position="459"/>
    </location>
    <ligand>
        <name>a 1,2-diacyl-sn-glycero-3-phospho-(1D-myo-inositol-3,5-bisphosphate)</name>
        <dbReference type="ChEBI" id="CHEBI:57923"/>
    </ligand>
</feature>
<feature type="binding site" evidence="1">
    <location>
        <position position="463"/>
    </location>
    <ligand>
        <name>a 1,2-diacyl-sn-glycero-3-phospho-(1D-myo-inositol-3,5-bisphosphate)</name>
        <dbReference type="ChEBI" id="CHEBI:57923"/>
    </ligand>
</feature>
<feature type="binding site" evidence="1">
    <location>
        <position position="463"/>
    </location>
    <ligand>
        <name>a 1,2-diacyl-sn-glycero-3-phospho-(1D-myo-inositol-3-phosphate)</name>
        <dbReference type="ChEBI" id="CHEBI:58088"/>
    </ligand>
</feature>
<feature type="modified residue" description="Phosphoserine" evidence="2">
    <location>
        <position position="6"/>
    </location>
</feature>
<feature type="modified residue" description="Phosphoserine" evidence="2">
    <location>
        <position position="9"/>
    </location>
</feature>
<feature type="modified residue" description="Phosphoserine" evidence="1">
    <location>
        <position position="58"/>
    </location>
</feature>
<sequence length="643" mass="73384">MEKSSSCESLGSQPAAARPPSVDSLSSASTSHSENSVHTKSASVVSSDSISTSADNFSPDLRVLRESNKLAEMEEPPLLPGENIKDMAKDVTYICPFTGAVRGTLTVTNYRLYFKSMERDPPFVLDASLGVINRVEKIGGASSRGENSYGLETVCKDIRNLRFAHKPEGRTRRSIFENLMKYAFPVSNNLPLFAFEYKEVFPENGWKLYDPLLEYRRQGIPNESWRITKINERYELCDTYPALLVVPANIPDEELKRVASFRSRGRIPVLSWIHPESQATITRCSQPMVGVSGKRSKEDEKYLQAIMDSNAQSHEIFIFDARPSVNAVANKAKGGGYESEDAYQNAELVFLDIHNIHVMRESLRKLKEIVYPNIEETHWLSNLESTHWLEHIKLILAGALRIADKVESGKTSVIVHCSDGWDRTAQLTSLAMLMLDGYYRTTRGFEVLVEKEWLSFGHRFQLRVGHGDKNHADADRSPVFLQFIDCVWQMTRQFPTAFEFNEYFLITILDHLYSCLFGTFLCNSEQQRGKENLPKRTVSLWSYINSQLEDFTNPLYGSYSNHVLYPVASMRHLELWVGYYIRWNPRMKPQEPIHNRYKELLAKRAELQKKVEELQREISNRSTSSSERASSPAQCVTPVQTVV</sequence>
<gene>
    <name evidence="1" type="primary">MTMR2</name>
</gene>
<dbReference type="EC" id="3.1.3.95" evidence="1"/>
<dbReference type="EMBL" id="CR857613">
    <property type="protein sequence ID" value="CAH89888.1"/>
    <property type="molecule type" value="mRNA"/>
</dbReference>
<dbReference type="RefSeq" id="NP_001127209.1">
    <property type="nucleotide sequence ID" value="NM_001133737.1"/>
</dbReference>
<dbReference type="SMR" id="Q5REB9"/>
<dbReference type="FunCoup" id="Q5REB9">
    <property type="interactions" value="1685"/>
</dbReference>
<dbReference type="STRING" id="9601.ENSPPYP00000004337"/>
<dbReference type="GeneID" id="100174264"/>
<dbReference type="KEGG" id="pon:100174264"/>
<dbReference type="CTD" id="8898"/>
<dbReference type="eggNOG" id="KOG4471">
    <property type="taxonomic scope" value="Eukaryota"/>
</dbReference>
<dbReference type="InParanoid" id="Q5REB9"/>
<dbReference type="OrthoDB" id="271628at2759"/>
<dbReference type="Proteomes" id="UP000001595">
    <property type="component" value="Unplaced"/>
</dbReference>
<dbReference type="GO" id="GO:0030424">
    <property type="term" value="C:axon"/>
    <property type="evidence" value="ECO:0007669"/>
    <property type="project" value="UniProtKB-SubCell"/>
</dbReference>
<dbReference type="GO" id="GO:0005829">
    <property type="term" value="C:cytosol"/>
    <property type="evidence" value="ECO:0000250"/>
    <property type="project" value="UniProtKB"/>
</dbReference>
<dbReference type="GO" id="GO:0031901">
    <property type="term" value="C:early endosome membrane"/>
    <property type="evidence" value="ECO:0007669"/>
    <property type="project" value="UniProtKB-SubCell"/>
</dbReference>
<dbReference type="GO" id="GO:0048471">
    <property type="term" value="C:perinuclear region of cytoplasm"/>
    <property type="evidence" value="ECO:0007669"/>
    <property type="project" value="UniProtKB-SubCell"/>
</dbReference>
<dbReference type="GO" id="GO:0052629">
    <property type="term" value="F:phosphatidylinositol-3,5-bisphosphate 3-phosphatase activity"/>
    <property type="evidence" value="ECO:0000250"/>
    <property type="project" value="UniProtKB"/>
</dbReference>
<dbReference type="GO" id="GO:0004438">
    <property type="term" value="F:phosphatidylinositol-3-phosphate phosphatase activity"/>
    <property type="evidence" value="ECO:0000250"/>
    <property type="project" value="UniProtKB"/>
</dbReference>
<dbReference type="GO" id="GO:0006661">
    <property type="term" value="P:phosphatidylinositol biosynthetic process"/>
    <property type="evidence" value="ECO:0007669"/>
    <property type="project" value="UniProtKB-ARBA"/>
</dbReference>
<dbReference type="GO" id="GO:0046856">
    <property type="term" value="P:phosphatidylinositol dephosphorylation"/>
    <property type="evidence" value="ECO:0000250"/>
    <property type="project" value="UniProtKB"/>
</dbReference>
<dbReference type="CDD" id="cd14590">
    <property type="entry name" value="PTP-MTMR2"/>
    <property type="match status" value="1"/>
</dbReference>
<dbReference type="FunFam" id="2.30.29.30:FF:000038">
    <property type="entry name" value="Myotubularin 1, isoform CRA_a"/>
    <property type="match status" value="1"/>
</dbReference>
<dbReference type="Gene3D" id="2.30.29.30">
    <property type="entry name" value="Pleckstrin-homology domain (PH domain)/Phosphotyrosine-binding domain (PTB)"/>
    <property type="match status" value="1"/>
</dbReference>
<dbReference type="InterPro" id="IPR004182">
    <property type="entry name" value="GRAM"/>
</dbReference>
<dbReference type="InterPro" id="IPR030564">
    <property type="entry name" value="Myotubularin"/>
</dbReference>
<dbReference type="InterPro" id="IPR010569">
    <property type="entry name" value="Myotubularin-like_Pase_dom"/>
</dbReference>
<dbReference type="InterPro" id="IPR011993">
    <property type="entry name" value="PH-like_dom_sf"/>
</dbReference>
<dbReference type="InterPro" id="IPR029021">
    <property type="entry name" value="Prot-tyrosine_phosphatase-like"/>
</dbReference>
<dbReference type="InterPro" id="IPR016130">
    <property type="entry name" value="Tyr_Pase_AS"/>
</dbReference>
<dbReference type="InterPro" id="IPR003595">
    <property type="entry name" value="Tyr_Pase_cat"/>
</dbReference>
<dbReference type="InterPro" id="IPR000387">
    <property type="entry name" value="Tyr_Pase_dom"/>
</dbReference>
<dbReference type="PANTHER" id="PTHR10807">
    <property type="entry name" value="MYOTUBULARIN-RELATED"/>
    <property type="match status" value="1"/>
</dbReference>
<dbReference type="PANTHER" id="PTHR10807:SF42">
    <property type="entry name" value="MYOTUBULARIN-RELATED PROTEIN 2"/>
    <property type="match status" value="1"/>
</dbReference>
<dbReference type="Pfam" id="PF02893">
    <property type="entry name" value="GRAM"/>
    <property type="match status" value="1"/>
</dbReference>
<dbReference type="Pfam" id="PF06602">
    <property type="entry name" value="Myotub-related"/>
    <property type="match status" value="1"/>
</dbReference>
<dbReference type="SMART" id="SM00568">
    <property type="entry name" value="GRAM"/>
    <property type="match status" value="1"/>
</dbReference>
<dbReference type="SMART" id="SM00404">
    <property type="entry name" value="PTPc_motif"/>
    <property type="match status" value="1"/>
</dbReference>
<dbReference type="SUPFAM" id="SSF52799">
    <property type="entry name" value="(Phosphotyrosine protein) phosphatases II"/>
    <property type="match status" value="1"/>
</dbReference>
<dbReference type="SUPFAM" id="SSF50729">
    <property type="entry name" value="PH domain-like"/>
    <property type="match status" value="1"/>
</dbReference>
<dbReference type="PROSITE" id="PS51339">
    <property type="entry name" value="PPASE_MYOTUBULARIN"/>
    <property type="match status" value="1"/>
</dbReference>
<dbReference type="PROSITE" id="PS00383">
    <property type="entry name" value="TYR_PHOSPHATASE_1"/>
    <property type="match status" value="1"/>
</dbReference>
<dbReference type="PROSITE" id="PS50056">
    <property type="entry name" value="TYR_PHOSPHATASE_2"/>
    <property type="match status" value="1"/>
</dbReference>
<keyword id="KW-0966">Cell projection</keyword>
<keyword id="KW-0175">Coiled coil</keyword>
<keyword id="KW-0963">Cytoplasm</keyword>
<keyword id="KW-0967">Endosome</keyword>
<keyword id="KW-0378">Hydrolase</keyword>
<keyword id="KW-0443">Lipid metabolism</keyword>
<keyword id="KW-0472">Membrane</keyword>
<keyword id="KW-0597">Phosphoprotein</keyword>
<keyword id="KW-1185">Reference proteome</keyword>
<comment type="function">
    <text evidence="1">Lipid phosphatase that specifically dephosphorylates the D-3 position of phosphatidylinositol 3-phosphate and phosphatidylinositol 3,5-bisphosphate, generating phosphatidylinositol and phosphatidylinositol 5-phosphate. Regulates the level of these phosphoinositides critical for various biological processes including autophagy initiation and autophagosome maturation.</text>
</comment>
<comment type="catalytic activity">
    <reaction evidence="1">
        <text>a 1,2-diacyl-sn-glycero-3-phospho-(1D-myo-inositol-3,5-bisphosphate) + H2O = a 1,2-diacyl-sn-glycero-3-phospho-(1D-myo-inositol-5-phosphate) + phosphate</text>
        <dbReference type="Rhea" id="RHEA:39019"/>
        <dbReference type="ChEBI" id="CHEBI:15377"/>
        <dbReference type="ChEBI" id="CHEBI:43474"/>
        <dbReference type="ChEBI" id="CHEBI:57795"/>
        <dbReference type="ChEBI" id="CHEBI:57923"/>
        <dbReference type="EC" id="3.1.3.95"/>
    </reaction>
    <physiologicalReaction direction="left-to-right" evidence="1">
        <dbReference type="Rhea" id="RHEA:39020"/>
    </physiologicalReaction>
</comment>
<comment type="catalytic activity">
    <reaction evidence="1">
        <text>a 1,2-diacyl-sn-glycero-3-phospho-(1D-myo-inositol-3-phosphate) + H2O = a 1,2-diacyl-sn-glycero-3-phospho-(1D-myo-inositol) + phosphate</text>
        <dbReference type="Rhea" id="RHEA:12316"/>
        <dbReference type="ChEBI" id="CHEBI:15377"/>
        <dbReference type="ChEBI" id="CHEBI:43474"/>
        <dbReference type="ChEBI" id="CHEBI:57880"/>
        <dbReference type="ChEBI" id="CHEBI:58088"/>
    </reaction>
    <physiologicalReaction direction="left-to-right" evidence="1">
        <dbReference type="Rhea" id="RHEA:12317"/>
    </physiologicalReaction>
</comment>
<comment type="catalytic activity">
    <reaction evidence="1">
        <text>1,2-dioctanoyl-sn-glycero-3-phospho-(1-D-myo-inositol-3-phosphate) + H2O = 1,2-dioctanoyl-sn-glycero-3-phospho-(1D-myo-inositol) + phosphate</text>
        <dbReference type="Rhea" id="RHEA:42328"/>
        <dbReference type="ChEBI" id="CHEBI:15377"/>
        <dbReference type="ChEBI" id="CHEBI:43474"/>
        <dbReference type="ChEBI" id="CHEBI:65221"/>
        <dbReference type="ChEBI" id="CHEBI:78934"/>
    </reaction>
    <physiologicalReaction direction="left-to-right" evidence="1">
        <dbReference type="Rhea" id="RHEA:42329"/>
    </physiologicalReaction>
</comment>
<comment type="catalytic activity">
    <reaction evidence="1">
        <text>1,2-dioctanoyl-sn-glycero-3-phospho-(1D-myo-inositol-3,5-bisphosphate) + H2O = 1,2-dioctanoyl-sn-glycero-3-phospho-(1D-myo-inositol-5-phosphate) + phosphate</text>
        <dbReference type="Rhea" id="RHEA:45632"/>
        <dbReference type="ChEBI" id="CHEBI:15377"/>
        <dbReference type="ChEBI" id="CHEBI:43474"/>
        <dbReference type="ChEBI" id="CHEBI:78911"/>
        <dbReference type="ChEBI" id="CHEBI:85342"/>
    </reaction>
    <physiologicalReaction direction="left-to-right" evidence="1">
        <dbReference type="Rhea" id="RHEA:45633"/>
    </physiologicalReaction>
</comment>
<comment type="subunit">
    <text evidence="1 2">Homodimer (via coiled-coil domain). Heterotetramer consisting of one MTMR2 dimer and one SBF2/MTMR13 dimer; specifically in peripheral nerves stabilizes SBF2/MTMR13 at the membranes and increases MTMR2 catalytic activity towards phosphatidylinositol 3,5-bisphosphate and to a lesser extent towards phosphatidylinositol 3-phosphate (By similarity). Heterodimer with SBF1/MTMR5; acts as an adapter for the phosphatase MTMR2 to regulate MTMR2 catalytic activity and subcellular location (By similarity). Heterodimer with MTMR12 (By similarity).</text>
</comment>
<comment type="subcellular location">
    <subcellularLocation>
        <location evidence="1">Cytoplasm</location>
    </subcellularLocation>
    <subcellularLocation>
        <location evidence="1">Early endosome membrane</location>
        <topology evidence="1">Peripheral membrane protein</topology>
    </subcellularLocation>
    <subcellularLocation>
        <location evidence="1">Cytoplasm</location>
        <location evidence="1">Perinuclear region</location>
    </subcellularLocation>
    <subcellularLocation>
        <location evidence="2">Cell projection</location>
        <location evidence="2">Axon</location>
    </subcellularLocation>
    <subcellularLocation>
        <location evidence="2">Endosome membrane</location>
        <topology evidence="1">Peripheral membrane protein</topology>
    </subcellularLocation>
    <text evidence="1 2">Partly associated with membranes (By similarity). Localizes to vacuoles in hypo-osmotic conditions (By similarity).</text>
</comment>
<comment type="domain">
    <text evidence="1 2">The coiled-coil domain mediates homodimerization. Also mediates interaction with SBF1/MTMR5 (By similarity). By mediating MTMR2 homodimerization, indirectly involved in SBF2/MTMR13 and MTMR2 heterotetramerization (By similarity).</text>
</comment>
<comment type="domain">
    <text evidence="2">The GRAM domain mediates binding to phosphatidylinositol 4-phosphate, phosphatidylinositol 5-phosphate, phosphatidylinositol 3,5-bisphosphate and phosphatidylinositol 3,4,5-trisphosphate.</text>
</comment>
<comment type="PTM">
    <text evidence="1">Phosphorylation at Ser-58 decreases MTMR2 localization to endocytic vesicular structures.</text>
</comment>
<comment type="similarity">
    <text evidence="6">Belongs to the protein-tyrosine phosphatase family. Non-receptor class myotubularin subfamily.</text>
</comment>